<organism>
    <name type="scientific">Synechocystis sp. (strain ATCC 27184 / PCC 6803 / Kazusa)</name>
    <dbReference type="NCBI Taxonomy" id="1111708"/>
    <lineage>
        <taxon>Bacteria</taxon>
        <taxon>Bacillati</taxon>
        <taxon>Cyanobacteriota</taxon>
        <taxon>Cyanophyceae</taxon>
        <taxon>Synechococcales</taxon>
        <taxon>Merismopediaceae</taxon>
        <taxon>Synechocystis</taxon>
    </lineage>
</organism>
<sequence length="190" mass="20684">MAGVDEVGRGALFGPVVAAAVLVPIEAINQLQALGVKDSKQLSPQHRSQLAQALPDYVHSYGISFADVPTINRVNIRQASLLAMERAVQKLPVMPAWVLVDGRDTLPHIAMAQMAVTGGDRKSLLISAASILAKVWRDTLITRLAERFPGYDLASNKGYGTAKHRQGLRQYGATPLHRPLFCRKIIENPD</sequence>
<protein>
    <recommendedName>
        <fullName>Ribonuclease HII</fullName>
        <shortName>RNase HII</shortName>
        <ecNumber>3.1.26.4</ecNumber>
    </recommendedName>
</protein>
<dbReference type="EC" id="3.1.26.4"/>
<dbReference type="EMBL" id="BA000022">
    <property type="protein sequence ID" value="BAA16659.1"/>
    <property type="molecule type" value="Genomic_DNA"/>
</dbReference>
<dbReference type="PIR" id="S74507">
    <property type="entry name" value="S74507"/>
</dbReference>
<dbReference type="SMR" id="P72657"/>
<dbReference type="FunCoup" id="P72657">
    <property type="interactions" value="432"/>
</dbReference>
<dbReference type="STRING" id="1148.gene:10497514"/>
<dbReference type="PaxDb" id="1148-1651731"/>
<dbReference type="EnsemblBacteria" id="BAA16659">
    <property type="protein sequence ID" value="BAA16659"/>
    <property type="gene ID" value="BAA16659"/>
</dbReference>
<dbReference type="KEGG" id="syn:slr1130"/>
<dbReference type="eggNOG" id="COG0164">
    <property type="taxonomic scope" value="Bacteria"/>
</dbReference>
<dbReference type="InParanoid" id="P72657"/>
<dbReference type="PhylomeDB" id="P72657"/>
<dbReference type="Proteomes" id="UP000001425">
    <property type="component" value="Chromosome"/>
</dbReference>
<dbReference type="GO" id="GO:0005737">
    <property type="term" value="C:cytoplasm"/>
    <property type="evidence" value="ECO:0007669"/>
    <property type="project" value="UniProtKB-SubCell"/>
</dbReference>
<dbReference type="GO" id="GO:0032299">
    <property type="term" value="C:ribonuclease H2 complex"/>
    <property type="evidence" value="ECO:0000318"/>
    <property type="project" value="GO_Central"/>
</dbReference>
<dbReference type="GO" id="GO:0030145">
    <property type="term" value="F:manganese ion binding"/>
    <property type="evidence" value="ECO:0007669"/>
    <property type="project" value="UniProtKB-UniRule"/>
</dbReference>
<dbReference type="GO" id="GO:0003723">
    <property type="term" value="F:RNA binding"/>
    <property type="evidence" value="ECO:0007669"/>
    <property type="project" value="InterPro"/>
</dbReference>
<dbReference type="GO" id="GO:0004523">
    <property type="term" value="F:RNA-DNA hybrid ribonuclease activity"/>
    <property type="evidence" value="ECO:0000318"/>
    <property type="project" value="GO_Central"/>
</dbReference>
<dbReference type="GO" id="GO:0043137">
    <property type="term" value="P:DNA replication, removal of RNA primer"/>
    <property type="evidence" value="ECO:0000318"/>
    <property type="project" value="GO_Central"/>
</dbReference>
<dbReference type="GO" id="GO:0006298">
    <property type="term" value="P:mismatch repair"/>
    <property type="evidence" value="ECO:0000318"/>
    <property type="project" value="GO_Central"/>
</dbReference>
<dbReference type="CDD" id="cd07182">
    <property type="entry name" value="RNase_HII_bacteria_HII_like"/>
    <property type="match status" value="1"/>
</dbReference>
<dbReference type="FunFam" id="3.30.420.10:FF:000167">
    <property type="entry name" value="Ribonuclease HII"/>
    <property type="match status" value="1"/>
</dbReference>
<dbReference type="Gene3D" id="3.30.420.10">
    <property type="entry name" value="Ribonuclease H-like superfamily/Ribonuclease H"/>
    <property type="match status" value="1"/>
</dbReference>
<dbReference type="HAMAP" id="MF_00052_B">
    <property type="entry name" value="RNase_HII_B"/>
    <property type="match status" value="1"/>
</dbReference>
<dbReference type="InterPro" id="IPR022898">
    <property type="entry name" value="RNase_HII"/>
</dbReference>
<dbReference type="InterPro" id="IPR001352">
    <property type="entry name" value="RNase_HII/HIII"/>
</dbReference>
<dbReference type="InterPro" id="IPR024567">
    <property type="entry name" value="RNase_HII/HIII_dom"/>
</dbReference>
<dbReference type="InterPro" id="IPR012337">
    <property type="entry name" value="RNaseH-like_sf"/>
</dbReference>
<dbReference type="InterPro" id="IPR036397">
    <property type="entry name" value="RNaseH_sf"/>
</dbReference>
<dbReference type="NCBIfam" id="NF000595">
    <property type="entry name" value="PRK00015.1-3"/>
    <property type="match status" value="1"/>
</dbReference>
<dbReference type="PANTHER" id="PTHR10954">
    <property type="entry name" value="RIBONUCLEASE H2 SUBUNIT A"/>
    <property type="match status" value="1"/>
</dbReference>
<dbReference type="PANTHER" id="PTHR10954:SF18">
    <property type="entry name" value="RIBONUCLEASE HII"/>
    <property type="match status" value="1"/>
</dbReference>
<dbReference type="Pfam" id="PF01351">
    <property type="entry name" value="RNase_HII"/>
    <property type="match status" value="1"/>
</dbReference>
<dbReference type="SUPFAM" id="SSF53098">
    <property type="entry name" value="Ribonuclease H-like"/>
    <property type="match status" value="1"/>
</dbReference>
<dbReference type="PROSITE" id="PS51975">
    <property type="entry name" value="RNASE_H_2"/>
    <property type="match status" value="1"/>
</dbReference>
<keyword id="KW-0963">Cytoplasm</keyword>
<keyword id="KW-0255">Endonuclease</keyword>
<keyword id="KW-0378">Hydrolase</keyword>
<keyword id="KW-0464">Manganese</keyword>
<keyword id="KW-0479">Metal-binding</keyword>
<keyword id="KW-0540">Nuclease</keyword>
<keyword id="KW-1185">Reference proteome</keyword>
<proteinExistence type="inferred from homology"/>
<feature type="chain" id="PRO_0000111642" description="Ribonuclease HII">
    <location>
        <begin position="1"/>
        <end position="190"/>
    </location>
</feature>
<feature type="domain" description="RNase H type-2" evidence="2">
    <location>
        <begin position="1"/>
        <end position="190"/>
    </location>
</feature>
<feature type="binding site" evidence="1">
    <location>
        <position position="5"/>
    </location>
    <ligand>
        <name>a divalent metal cation</name>
        <dbReference type="ChEBI" id="CHEBI:60240"/>
    </ligand>
</feature>
<feature type="binding site" evidence="1">
    <location>
        <position position="6"/>
    </location>
    <ligand>
        <name>a divalent metal cation</name>
        <dbReference type="ChEBI" id="CHEBI:60240"/>
    </ligand>
</feature>
<feature type="binding site" evidence="1">
    <location>
        <position position="101"/>
    </location>
    <ligand>
        <name>a divalent metal cation</name>
        <dbReference type="ChEBI" id="CHEBI:60240"/>
    </ligand>
</feature>
<evidence type="ECO:0000250" key="1"/>
<evidence type="ECO:0000255" key="2">
    <source>
        <dbReference type="PROSITE-ProRule" id="PRU01319"/>
    </source>
</evidence>
<evidence type="ECO:0000305" key="3"/>
<reference key="1">
    <citation type="journal article" date="1996" name="DNA Res.">
        <title>Sequence analysis of the genome of the unicellular cyanobacterium Synechocystis sp. strain PCC6803. II. Sequence determination of the entire genome and assignment of potential protein-coding regions.</title>
        <authorList>
            <person name="Kaneko T."/>
            <person name="Sato S."/>
            <person name="Kotani H."/>
            <person name="Tanaka A."/>
            <person name="Asamizu E."/>
            <person name="Nakamura Y."/>
            <person name="Miyajima N."/>
            <person name="Hirosawa M."/>
            <person name="Sugiura M."/>
            <person name="Sasamoto S."/>
            <person name="Kimura T."/>
            <person name="Hosouchi T."/>
            <person name="Matsuno A."/>
            <person name="Muraki A."/>
            <person name="Nakazaki N."/>
            <person name="Naruo K."/>
            <person name="Okumura S."/>
            <person name="Shimpo S."/>
            <person name="Takeuchi C."/>
            <person name="Wada T."/>
            <person name="Watanabe A."/>
            <person name="Yamada M."/>
            <person name="Yasuda M."/>
            <person name="Tabata S."/>
        </authorList>
    </citation>
    <scope>NUCLEOTIDE SEQUENCE [LARGE SCALE GENOMIC DNA]</scope>
    <source>
        <strain>ATCC 27184 / PCC 6803 / Kazusa</strain>
    </source>
</reference>
<name>RNH2_SYNY3</name>
<accession>P72657</accession>
<comment type="function">
    <text evidence="1">Endonuclease that specifically degrades the RNA of RNA-DNA hybrids.</text>
</comment>
<comment type="catalytic activity">
    <reaction>
        <text>Endonucleolytic cleavage to 5'-phosphomonoester.</text>
        <dbReference type="EC" id="3.1.26.4"/>
    </reaction>
</comment>
<comment type="cofactor">
    <cofactor evidence="1">
        <name>Mn(2+)</name>
        <dbReference type="ChEBI" id="CHEBI:29035"/>
    </cofactor>
    <cofactor evidence="1">
        <name>Mg(2+)</name>
        <dbReference type="ChEBI" id="CHEBI:18420"/>
    </cofactor>
    <text evidence="1">Manganese or magnesium. Binds 1 divalent metal ion per monomer in the absence of substrate. May bind a second metal ion after substrate binding.</text>
</comment>
<comment type="subcellular location">
    <subcellularLocation>
        <location evidence="3">Cytoplasm</location>
    </subcellularLocation>
</comment>
<comment type="similarity">
    <text evidence="3">Belongs to the RNase HII family.</text>
</comment>
<gene>
    <name type="primary">rnhB</name>
    <name type="ordered locus">slr1130</name>
</gene>